<sequence length="1262" mass="144121">MKITNKSVDKQHIEKLDELRKNVSCTVIGFAEQTAELQQEISELFIAEFGVNGPIDMNSLSKLARITSYYASSEYFQGLAKYQRTACKMFITWQTLRKEAMECRSKDREIFASIPAKLCFFYFYNGELCRAVVCLLDYIDLSDDTLAKEAALRWLMFLGETELIEKKLKTWKMDKSSKDMFSATEFAMNYLKKSEYRVEMLEKLMKLRDKVKSDPTRSFSRYELASYVSWLCSTLSNVPVGSALRECEFPDRVSHIQEAALKSDSLVRNRIPGLASSQFDNSVNASIWPFLDGHQEDSNYYVHIGSTIAWHFEMRRECALVNVTTAQTRDSMSAMILNLRVALKSASFFRVLQTTNTLAYYSSIIEEAGSEKNAKLMRVSCVNLLSSNPIIVRCSTPKETGATSRAHTPMAGSSVSEKQNTMRPDLADLLGDLELLDEQSFHPITRSCVCNVCTIYPLHSSFAAEYMMSYAIHSDFSQLSIKHFNDEFARIRERGMSSQVLMHRDSSVRPRPNIIQNEIFGMCVIRWLTKKLDSKESADEDTMEIFNNALKIVRYLQQRTTDMILAVTQLGRQLEFPMECNYSWMRPTIRKPRVKATIDCAVDILRAVSPFGRRPKVEKLEKNLQPFDKERFEKVRLAMRNEMNHYGHILYREWRCRLFAYVGRTSRDPWEAAYAWAESTQIGARNAVQSRLEKCKRGLVTMSGHDRFKTCVQSMPDEMTLVQIAMADDKTIYLVKLHADRDPIIMPLAHYSQAVELMDKFTFLLDEDEMIAKYPGDITPEEFWKRRKIVDGRMMTFVDEVQKHFLGVAASLLMPSGQLGPKAAELAIKIHKLSKGGLLLGEAKEMVYQSKLMDAKSWEALILRFCEMRTTDEKFKSFLPLMHRNSVEVMNQDDSIVTEKKYTYLVICPHLSQFCWERLPIFDEYPYVGRQVSIHSTFSQLEAMKSQEKQIPLQIDVQNAYYILDPDNNLGETQKRMVEYINKFNWEGTVGSAPKSNEISAALSQRDAFFFIGHGSGSSVMPRSVLKQSTCNAISLLMGCGSVRTIPQALGFDGKTAILDYAMAKCPLIVGCLWTVTDGEIDRFLIRMIDDCFEDSKSLTGIDKLRQLSEAMHEARSKARLKYLTGAAVVMYGLPVVAKQTTPFVEKDQRNLPQTPKTSARTSMRMETVPKTPKQEFVTSKSVPMTPIFSNNENKSPSRARMPSRVLKTPRQVKTFQEEDDEAPKRSTTRQLKPLVAPPIPATPTTRTTRSSARTPSRSRNL</sequence>
<protein>
    <recommendedName>
        <fullName evidence="14">Separin homolog sep-1</fullName>
        <ecNumber evidence="16">3.4.22.49</ecNumber>
    </recommendedName>
    <alternativeName>
        <fullName evidence="21">Separase</fullName>
    </alternativeName>
</protein>
<accession>G5ED39</accession>
<dbReference type="EC" id="3.4.22.49" evidence="16"/>
<dbReference type="EMBL" id="AF399825">
    <property type="protein sequence ID" value="AAK77200.1"/>
    <property type="molecule type" value="mRNA"/>
</dbReference>
<dbReference type="EMBL" id="BX284601">
    <property type="protein sequence ID" value="CCD72557.1"/>
    <property type="molecule type" value="Genomic_DNA"/>
</dbReference>
<dbReference type="RefSeq" id="NP_491160.1">
    <property type="nucleotide sequence ID" value="NM_058759.7"/>
</dbReference>
<dbReference type="PDB" id="5MZ6">
    <property type="method" value="EM"/>
    <property type="resolution" value="3.80 A"/>
    <property type="chains" value="1=1-1262"/>
</dbReference>
<dbReference type="PDBsum" id="5MZ6"/>
<dbReference type="EMDB" id="EMD-3384"/>
<dbReference type="EMDB" id="EMD-3583"/>
<dbReference type="SMR" id="G5ED39"/>
<dbReference type="ComplexPortal" id="CPX-1411">
    <property type="entry name" value="Separase-Securin complex"/>
</dbReference>
<dbReference type="FunCoup" id="G5ED39">
    <property type="interactions" value="394"/>
</dbReference>
<dbReference type="IntAct" id="G5ED39">
    <property type="interactions" value="3"/>
</dbReference>
<dbReference type="STRING" id="6239.Y47G6A.12.2"/>
<dbReference type="MEROPS" id="C50.004"/>
<dbReference type="PaxDb" id="6239-Y47G6A.12"/>
<dbReference type="PeptideAtlas" id="G5ED39"/>
<dbReference type="EnsemblMetazoa" id="Y47G6A.12.1">
    <property type="protein sequence ID" value="Y47G6A.12.1"/>
    <property type="gene ID" value="WBGene00004775"/>
</dbReference>
<dbReference type="GeneID" id="171912"/>
<dbReference type="KEGG" id="cel:CELE_Y47G6A.12"/>
<dbReference type="AGR" id="WB:WBGene00004775"/>
<dbReference type="CTD" id="171912"/>
<dbReference type="WormBase" id="Y47G6A.12">
    <property type="protein sequence ID" value="CE22098"/>
    <property type="gene ID" value="WBGene00004775"/>
    <property type="gene designation" value="sep-1"/>
</dbReference>
<dbReference type="eggNOG" id="KOG1849">
    <property type="taxonomic scope" value="Eukaryota"/>
</dbReference>
<dbReference type="GeneTree" id="ENSGT00390000004990"/>
<dbReference type="HOGENOM" id="CLU_278759_0_0_1"/>
<dbReference type="InParanoid" id="G5ED39"/>
<dbReference type="OMA" id="YARTACK"/>
<dbReference type="OrthoDB" id="10255632at2759"/>
<dbReference type="BRENDA" id="3.4.22.49">
    <property type="organism ID" value="1045"/>
</dbReference>
<dbReference type="Reactome" id="R-CEL-2467813">
    <property type="pathway name" value="Separation of Sister Chromatids"/>
</dbReference>
<dbReference type="SignaLink" id="G5ED39"/>
<dbReference type="CD-CODE" id="1E117272">
    <property type="entry name" value="Centrosome"/>
</dbReference>
<dbReference type="PRO" id="PR:G5ED39"/>
<dbReference type="Proteomes" id="UP000001940">
    <property type="component" value="Chromosome I"/>
</dbReference>
<dbReference type="Bgee" id="WBGene00004775">
    <property type="expression patterns" value="Expressed in germ line (C elegans) and 4 other cell types or tissues"/>
</dbReference>
<dbReference type="GO" id="GO:0005938">
    <property type="term" value="C:cell cortex"/>
    <property type="evidence" value="ECO:0000314"/>
    <property type="project" value="WormBase"/>
</dbReference>
<dbReference type="GO" id="GO:0005813">
    <property type="term" value="C:centrosome"/>
    <property type="evidence" value="ECO:0000314"/>
    <property type="project" value="UniProtKB"/>
</dbReference>
<dbReference type="GO" id="GO:0005694">
    <property type="term" value="C:chromosome"/>
    <property type="evidence" value="ECO:0000314"/>
    <property type="project" value="UniProtKB"/>
</dbReference>
<dbReference type="GO" id="GO:0032154">
    <property type="term" value="C:cleavage furrow"/>
    <property type="evidence" value="ECO:0000314"/>
    <property type="project" value="WormBase"/>
</dbReference>
<dbReference type="GO" id="GO:0000794">
    <property type="term" value="C:condensed nuclear chromosome"/>
    <property type="evidence" value="ECO:0000314"/>
    <property type="project" value="WormBase"/>
</dbReference>
<dbReference type="GO" id="GO:0060473">
    <property type="term" value="C:cortical granule"/>
    <property type="evidence" value="ECO:0000314"/>
    <property type="project" value="WormBase"/>
</dbReference>
<dbReference type="GO" id="GO:0005737">
    <property type="term" value="C:cytoplasm"/>
    <property type="evidence" value="ECO:0000314"/>
    <property type="project" value="UniProtKB"/>
</dbReference>
<dbReference type="GO" id="GO:0072687">
    <property type="term" value="C:meiotic spindle"/>
    <property type="evidence" value="ECO:0000314"/>
    <property type="project" value="WormBase"/>
</dbReference>
<dbReference type="GO" id="GO:0070090">
    <property type="term" value="C:metaphase plate"/>
    <property type="evidence" value="ECO:0000314"/>
    <property type="project" value="WormBase"/>
</dbReference>
<dbReference type="GO" id="GO:0030496">
    <property type="term" value="C:midbody"/>
    <property type="evidence" value="ECO:0000314"/>
    <property type="project" value="WormBase"/>
</dbReference>
<dbReference type="GO" id="GO:0072686">
    <property type="term" value="C:mitotic spindle"/>
    <property type="evidence" value="ECO:0000314"/>
    <property type="project" value="WormBase"/>
</dbReference>
<dbReference type="GO" id="GO:0005635">
    <property type="term" value="C:nuclear envelope"/>
    <property type="evidence" value="ECO:0000314"/>
    <property type="project" value="UniProtKB"/>
</dbReference>
<dbReference type="GO" id="GO:0005634">
    <property type="term" value="C:nucleus"/>
    <property type="evidence" value="ECO:0000318"/>
    <property type="project" value="GO_Central"/>
</dbReference>
<dbReference type="GO" id="GO:1990520">
    <property type="term" value="C:separase-securin complex"/>
    <property type="evidence" value="ECO:0000314"/>
    <property type="project" value="ComplexPortal"/>
</dbReference>
<dbReference type="GO" id="GO:0005819">
    <property type="term" value="C:spindle"/>
    <property type="evidence" value="ECO:0000314"/>
    <property type="project" value="WormBase"/>
</dbReference>
<dbReference type="GO" id="GO:0004197">
    <property type="term" value="F:cysteine-type endopeptidase activity"/>
    <property type="evidence" value="ECO:0000250"/>
    <property type="project" value="WormBase"/>
</dbReference>
<dbReference type="GO" id="GO:0060471">
    <property type="term" value="P:cortical granule exocytosis"/>
    <property type="evidence" value="ECO:0000315"/>
    <property type="project" value="WormBase"/>
</dbReference>
<dbReference type="GO" id="GO:0030703">
    <property type="term" value="P:eggshell formation"/>
    <property type="evidence" value="ECO:0000315"/>
    <property type="project" value="UniProtKB"/>
</dbReference>
<dbReference type="GO" id="GO:0034090">
    <property type="term" value="P:maintenance of meiotic sister chromatid cohesion"/>
    <property type="evidence" value="ECO:0000315"/>
    <property type="project" value="ComplexPortal"/>
</dbReference>
<dbReference type="GO" id="GO:0034088">
    <property type="term" value="P:maintenance of mitotic sister chromatid cohesion"/>
    <property type="evidence" value="ECO:0000315"/>
    <property type="project" value="ComplexPortal"/>
</dbReference>
<dbReference type="GO" id="GO:0051307">
    <property type="term" value="P:meiotic chromosome separation"/>
    <property type="evidence" value="ECO:0000315"/>
    <property type="project" value="UniProtKB"/>
</dbReference>
<dbReference type="GO" id="GO:0000281">
    <property type="term" value="P:mitotic cytokinesis"/>
    <property type="evidence" value="ECO:0000315"/>
    <property type="project" value="UniProtKB"/>
</dbReference>
<dbReference type="GO" id="GO:0051306">
    <property type="term" value="P:mitotic sister chromatid separation"/>
    <property type="evidence" value="ECO:0000315"/>
    <property type="project" value="UniProtKB"/>
</dbReference>
<dbReference type="GO" id="GO:0048609">
    <property type="term" value="P:multicellular organismal reproductive process"/>
    <property type="evidence" value="ECO:0000315"/>
    <property type="project" value="WormBase"/>
</dbReference>
<dbReference type="GO" id="GO:0040038">
    <property type="term" value="P:polar body extrusion after meiotic divisions"/>
    <property type="evidence" value="ECO:0000315"/>
    <property type="project" value="UniProtKB"/>
</dbReference>
<dbReference type="GO" id="GO:0009949">
    <property type="term" value="P:polarity specification of anterior/posterior axis"/>
    <property type="evidence" value="ECO:0000315"/>
    <property type="project" value="UniProtKB"/>
</dbReference>
<dbReference type="GO" id="GO:0008104">
    <property type="term" value="P:protein localization"/>
    <property type="evidence" value="ECO:0000315"/>
    <property type="project" value="UniProtKB"/>
</dbReference>
<dbReference type="GO" id="GO:0016485">
    <property type="term" value="P:protein processing"/>
    <property type="evidence" value="ECO:0000315"/>
    <property type="project" value="UniProtKB"/>
</dbReference>
<dbReference type="GO" id="GO:0030997">
    <property type="term" value="P:regulation of centriole-centriole cohesion"/>
    <property type="evidence" value="ECO:0000315"/>
    <property type="project" value="UniProtKB"/>
</dbReference>
<dbReference type="GO" id="GO:0017157">
    <property type="term" value="P:regulation of exocytosis"/>
    <property type="evidence" value="ECO:0000315"/>
    <property type="project" value="UniProtKB"/>
</dbReference>
<dbReference type="GO" id="GO:0040012">
    <property type="term" value="P:regulation of locomotion"/>
    <property type="evidence" value="ECO:0000315"/>
    <property type="project" value="WormBase"/>
</dbReference>
<dbReference type="GO" id="GO:0061062">
    <property type="term" value="P:regulation of nematode larval development"/>
    <property type="evidence" value="ECO:0000315"/>
    <property type="project" value="WormBase"/>
</dbReference>
<dbReference type="DisProt" id="DP03050"/>
<dbReference type="InterPro" id="IPR005314">
    <property type="entry name" value="Peptidase_C50"/>
</dbReference>
<dbReference type="InterPro" id="IPR030397">
    <property type="entry name" value="SEPARIN_core_dom"/>
</dbReference>
<dbReference type="PANTHER" id="PTHR12792">
    <property type="entry name" value="EXTRA SPINDLE POLES 1-RELATED"/>
    <property type="match status" value="1"/>
</dbReference>
<dbReference type="PANTHER" id="PTHR12792:SF0">
    <property type="entry name" value="SEPARIN"/>
    <property type="match status" value="1"/>
</dbReference>
<dbReference type="Pfam" id="PF03568">
    <property type="entry name" value="Peptidase_C50"/>
    <property type="match status" value="1"/>
</dbReference>
<dbReference type="PROSITE" id="PS51700">
    <property type="entry name" value="SEPARIN"/>
    <property type="match status" value="1"/>
</dbReference>
<gene>
    <name evidence="21" type="primary">sep-1</name>
    <name evidence="21" type="ORF">Y47G6A.12</name>
</gene>
<comment type="function">
    <text evidence="3 4 5 6 7 8 9 11 14">Cysteine protease, which plays a central role in homologous chromosome separation during meiosis I and in sister chromatid separation during embryonic mitosis (PubMed:11728305, PubMed:12498686, PubMed:20116245, PubMed:21878498). Promotes chromosome/sister chromatid segregation by cleaving the scc-1 (mitosis) and rec-8 (meiosis) subunits of the cohesin complex at the onset of anaphase (Probable). May cleave histone H3-like protein cpar-1 during meiosis I metaphase-anaphase transition (PubMed:25919583). Promotes cortical granule exocytosis after oocyte fertilization during the first meiotic anaphase (PubMed:17913784, PubMed:21878498). Essential for embryonic cytokinesis by regulating rab-11-positive vesicle trafficking at the plasma membrane at the cleavage furrow and midbody (PubMed:20116245). Regulates centriole segregation during spermatocyte meiosis (PubMed:23401519). Required for embryonic anterior-posterior axis formation (PubMed:11832245).</text>
</comment>
<comment type="catalytic activity">
    <reaction evidence="16">
        <text>All bonds known to be hydrolyzed by this endopeptidase have arginine in P1 and an acidic residue in P4. P6 is often occupied by an acidic residue or by a hydroxy-amino-acid residue, the phosphorylation of which enhances cleavage.</text>
        <dbReference type="EC" id="3.4.22.49"/>
    </reaction>
</comment>
<comment type="activity regulation">
    <text evidence="15 17 18">Probably maintained in an inactive state via its interaction with securin ify-1 which acts as a pseudosubstrate thereby blocking access to the catalytic site. Upon ify-1 degradation at the onset of anaphase, sep-1 is likely to become active. In addition, interaction with ify-1 stabilizes sep-1.</text>
</comment>
<comment type="subunit">
    <text evidence="5 10 12 13">Forms a complex with securin-like protein ify-1 (via C-terminus) (PubMed:12498686, PubMed:23578927, PubMed:27249343, PubMed:28263324). Interaction with ify-1 stabilizes sep-1 (PubMed:27249343, PubMed:28263324). Also maintains the complex in the cytoplasm during interphase and recruits it to chromosomes during the first meiotic division (PubMed:23578927).</text>
</comment>
<comment type="interaction">
    <interactant intactId="EBI-326265">
        <id>G5ED39</id>
    </interactant>
    <interactant intactId="EBI-331643">
        <id>Q18235</id>
        <label>ify-1</label>
    </interactant>
    <organismsDiffer>false</organismsDiffer>
    <experiments>4</experiments>
</comment>
<comment type="subcellular location">
    <subcellularLocation>
        <location evidence="6 9">Cytoplasm</location>
    </subcellularLocation>
    <subcellularLocation>
        <location evidence="6 7 9">Chromosome</location>
    </subcellularLocation>
    <subcellularLocation>
        <location evidence="6 8">Cytoplasmic granule</location>
    </subcellularLocation>
    <subcellularLocation>
        <location evidence="6">Cytoplasm</location>
        <location evidence="6">Cytoskeleton</location>
    </subcellularLocation>
    <subcellularLocation>
        <location evidence="6 7 9">Cytoplasm</location>
        <location evidence="6 7 9">Cytoskeleton</location>
        <location evidence="6 7 9">Microtubule organizing center</location>
        <location evidence="6 7 9">Centrosome</location>
    </subcellularLocation>
    <subcellularLocation>
        <location evidence="6 7 8">Cytoplasm</location>
        <location evidence="6 7 8">Cytoskeleton</location>
        <location evidence="6 7 8">Spindle</location>
    </subcellularLocation>
    <subcellularLocation>
        <location evidence="7">Cleavage furrow</location>
    </subcellularLocation>
    <subcellularLocation>
        <location evidence="7">Midbody</location>
    </subcellularLocation>
    <text evidence="6 7 8 9">Before ovulation, accumulates on chromosomes and cortical filaments in oocytes (PubMed:17913784). By metaphase I, dissociates from filaments and transiently localizes to cortical granules until their exocytosis during anaphase I followed by an accumulation at the cortex near the polar body (PubMed:17913784). Localizes to meiotic spindle matrix (PubMed:21878498). During mitotic metaphase and anaphase, localizes to chromosomes, centrosomes and the spindle matrix (PubMed:17913784, PubMed:20116245, PubMed:21878498). During spermatogenesis, localizes to the spermatocyte cytoplasm throughout meiotic prophase I (PubMed:23401519). At the diplotene stage of prophase I accumulates at low levels in puncta around the nuclear envelope (PubMed:23401519). At diakinesis, transiently localizes to centrosomes until nuclear envelope breakdown (PubMed:23401519). At metaphase I and II becomes highly enriched around chromosomes (PubMed:23401519). At anaphase I and II, chromosomal localization is reduced and centrosome localization is highly increased (PubMed:23401519). Localizes to residual body during the budding division leading to spermatid formation (PubMed:23401519).</text>
</comment>
<comment type="tissue specificity">
    <text evidence="6 9">Expressed in oocytes (PubMed:17913784). Expressed in male germline (PubMed:23401519). Expressed in spermatocytes but undetectable in spermatids (at protein level) (PubMed:23401519).</text>
</comment>
<comment type="developmental stage">
    <text evidence="6 7">Expressed in embryos (at protein level).</text>
</comment>
<comment type="disruption phenotype">
    <text evidence="3 4 5 6 7 8 10 11">RNAi-mediated knockdown causes embryonic lethality where embryos are arrested at the onset of meiotic anaphase I (PubMed:11728305, PubMed:12498686, PubMed:23578927). During the first meiotic cell division, homologous chromosome segregation and formation of polar bodies are impaired, and multiple centrosomes accumulate resulting from a failure to undergo cytokinesis (PubMed:11728305, PubMed:12498686, PubMed:17913784, PubMed:20116245, PubMed:21878498). During meiotic anaphase I, impaired cortical granules exocytosis resulting in the formation of a one-layered eggshell instead of the normal three-layered eggshell (PubMed:11728305, PubMed:17913784, PubMed:21878498). In oocytes, ify-1 prematurely enters the nucleus prior to the nuclear envelope breakdown and fails to associate with chromosomes during meiosis I without affecting its spindle association (PubMed:23578927). Prevents histone H3-like cpar-1 cleavage at the onset of meiotic anaphase I and during embryonic mitosis (PubMed:25919583). In addition, in the one-cell embryo, causes defects in embryonic anterior-posterior polarization characterized by a failure of cortical association and posterior positioning of the paternal pronucleus and the mislocalization of par-2 and pie-1 (PubMed:11832245). During the first embryonic mitosis, abnormal accumulation of rab-11 at the cleavage furrow and midbody and furrow regression resulting in a failure to complete cytokinesis (PubMed:20116245).</text>
</comment>
<organism evidence="20">
    <name type="scientific">Caenorhabditis elegans</name>
    <dbReference type="NCBI Taxonomy" id="6239"/>
    <lineage>
        <taxon>Eukaryota</taxon>
        <taxon>Metazoa</taxon>
        <taxon>Ecdysozoa</taxon>
        <taxon>Nematoda</taxon>
        <taxon>Chromadorea</taxon>
        <taxon>Rhabditida</taxon>
        <taxon>Rhabditina</taxon>
        <taxon>Rhabditomorpha</taxon>
        <taxon>Rhabditoidea</taxon>
        <taxon>Rhabditidae</taxon>
        <taxon>Peloderinae</taxon>
        <taxon>Caenorhabditis</taxon>
    </lineage>
</organism>
<feature type="chain" id="PRO_0000440177" description="Separin homolog sep-1" evidence="14">
    <location>
        <begin position="1"/>
        <end position="1262"/>
    </location>
</feature>
<feature type="domain" description="Peptidase C50" evidence="1">
    <location>
        <begin position="957"/>
        <end position="1051"/>
    </location>
</feature>
<feature type="region of interest" description="Disordered" evidence="2">
    <location>
        <begin position="1147"/>
        <end position="1262"/>
    </location>
</feature>
<feature type="compositionally biased region" description="Polar residues" evidence="2">
    <location>
        <begin position="1151"/>
        <end position="1162"/>
    </location>
</feature>
<feature type="compositionally biased region" description="Polar residues" evidence="2">
    <location>
        <begin position="1177"/>
        <end position="1197"/>
    </location>
</feature>
<feature type="compositionally biased region" description="Low complexity" evidence="2">
    <location>
        <begin position="1243"/>
        <end position="1262"/>
    </location>
</feature>
<feature type="active site" evidence="1">
    <location>
        <position position="1040"/>
    </location>
</feature>
<feature type="mutagenesis site" description="In ax521; embryos are arrested at the one-cell stage. No extrusion of polar bodies. Multiple rounds of DNA replication occur without cytokinesis. Slower chromosome segregation during the first embryonic mitosis but no chromosome separation defects during meiosis. Reduced cortical granules exocytosis during anaphase I resulting in eggshell defects. Loss of cortical granule localization." evidence="8">
    <original>C</original>
    <variation>Y</variation>
    <location>
        <position position="232"/>
    </location>
</feature>
<feature type="mutagenesis site" description="In e2406; temperature sensitive mutant which at the restrictive temperature of 25 degrees Celsius displays slow chromosome segregation and lacks cytokinesis in the one-cell stage embryo and during meiosis I. Reduced cortical granules exocytosis during anaphase I. Loss of cortical granule localization. Loss of cytokinesis resulting from furrow regression. At the end of second meiotic division, causes a premature dissociation of the two centrioles in spermatocytes. Permanent localization to centrosome throughout meiosis. Abnormal localization to sperm DNA in to a foci near the sperm chromatin in fertilized embryos." evidence="3 6 7 9">
    <original>C</original>
    <variation>Y</variation>
    <location>
        <position position="450"/>
    </location>
</feature>
<feature type="mutagenesis site" description="In ax110; embryos are arrested at the one-cell stage. No extrusion of polar bodies. Multiple rounds of DNA replication occur without cytokinesis. Slower chromosome segregation during the first embryonic mitosis but no chromosome separation defects during meiosis. Reduced cortical granules exocytosis during anaphase I resulting in eggshell defects. Loss of meiotic spindle and cortical granule localization. In a php-5 (av101) mutant background, cortical granule exocytosis and chromosome segregation are normal." evidence="8">
    <original>L</original>
    <variation>F</variation>
    <location>
        <position position="556"/>
    </location>
</feature>
<feature type="mutagenesis site" description="Probable loss of catalytic activity. Stronger accumulation at chromosomes, centrosomes, spindle, cleavage furrow and midbody during the first embryonic mitosis." evidence="7">
    <original>C</original>
    <variation>S</variation>
    <location>
        <position position="1040"/>
    </location>
</feature>
<name>SEP1_CAEEL</name>
<evidence type="ECO:0000255" key="1">
    <source>
        <dbReference type="PROSITE-ProRule" id="PRU01037"/>
    </source>
</evidence>
<evidence type="ECO:0000256" key="2">
    <source>
        <dbReference type="SAM" id="MobiDB-lite"/>
    </source>
</evidence>
<evidence type="ECO:0000269" key="3">
    <source>
    </source>
</evidence>
<evidence type="ECO:0000269" key="4">
    <source>
    </source>
</evidence>
<evidence type="ECO:0000269" key="5">
    <source>
    </source>
</evidence>
<evidence type="ECO:0000269" key="6">
    <source>
    </source>
</evidence>
<evidence type="ECO:0000269" key="7">
    <source>
    </source>
</evidence>
<evidence type="ECO:0000269" key="8">
    <source>
    </source>
</evidence>
<evidence type="ECO:0000269" key="9">
    <source>
    </source>
</evidence>
<evidence type="ECO:0000269" key="10">
    <source>
    </source>
</evidence>
<evidence type="ECO:0000269" key="11">
    <source>
    </source>
</evidence>
<evidence type="ECO:0000269" key="12">
    <source>
    </source>
</evidence>
<evidence type="ECO:0000269" key="13">
    <source>
    </source>
</evidence>
<evidence type="ECO:0000305" key="14"/>
<evidence type="ECO:0000305" key="15">
    <source>
    </source>
</evidence>
<evidence type="ECO:0000305" key="16">
    <source>
    </source>
</evidence>
<evidence type="ECO:0000305" key="17">
    <source>
    </source>
</evidence>
<evidence type="ECO:0000305" key="18">
    <source>
    </source>
</evidence>
<evidence type="ECO:0000312" key="19">
    <source>
        <dbReference type="EMBL" id="AAK77200.1"/>
    </source>
</evidence>
<evidence type="ECO:0000312" key="20">
    <source>
        <dbReference type="Proteomes" id="UP000001940"/>
    </source>
</evidence>
<evidence type="ECO:0000312" key="21">
    <source>
        <dbReference type="WormBase" id="Y47G6A.12"/>
    </source>
</evidence>
<reference evidence="19" key="1">
    <citation type="journal article" date="2001" name="Curr. Biol.">
        <title>Separase is required for chromosome segregation during meiosis I in Caenorhabditis elegans.</title>
        <authorList>
            <person name="Siomos M.F."/>
            <person name="Badrinath A."/>
            <person name="Pasierbek P."/>
            <person name="Livingstone D."/>
            <person name="White J."/>
            <person name="Glotzer M."/>
            <person name="Nasmyth K."/>
        </authorList>
    </citation>
    <scope>NUCLEOTIDE SEQUENCE [MRNA]</scope>
    <scope>FUNCTION</scope>
    <scope>DISRUPTION PHENOTYPE</scope>
    <scope>MUTAGENESIS OF CYS-450</scope>
</reference>
<reference evidence="20" key="2">
    <citation type="journal article" date="1998" name="Science">
        <title>Genome sequence of the nematode C. elegans: a platform for investigating biology.</title>
        <authorList>
            <consortium name="The C. elegans sequencing consortium"/>
        </authorList>
    </citation>
    <scope>NUCLEOTIDE SEQUENCE [LARGE SCALE GENOMIC DNA]</scope>
    <source>
        <strain evidence="20">Bristol N2</strain>
    </source>
</reference>
<reference evidence="14" key="3">
    <citation type="journal article" date="2002" name="Curr. Biol.">
        <title>The Cdc20 homolog, FZY-1, and its interacting protein, IFY-1, are required for proper chromosome segregation in Caenorhabditis elegans.</title>
        <authorList>
            <person name="Kitagawa R."/>
            <person name="Law E."/>
            <person name="Tang L."/>
            <person name="Rose A.M."/>
        </authorList>
    </citation>
    <scope>FUNCTION</scope>
    <scope>INTERACTION WITH IFY-1</scope>
    <scope>DISRUPTION PHENOTYPE</scope>
</reference>
<reference evidence="14" key="4">
    <citation type="journal article" date="2002" name="Dev. Cell">
        <title>The anaphase-promoting complex and separin are required for embryonic anterior-posterior axis formation.</title>
        <authorList>
            <person name="Rappleye C.A."/>
            <person name="Tagawa A."/>
            <person name="Lyczak R."/>
            <person name="Bowerman B."/>
            <person name="Aroian R.V."/>
        </authorList>
    </citation>
    <scope>FUNCTION</scope>
    <scope>DISRUPTION PHENOTYPE</scope>
</reference>
<reference evidence="14" key="5">
    <citation type="journal article" date="2007" name="Development">
        <title>Cortical granule exocytosis in C. elegans is regulated by cell cycle components including separase.</title>
        <authorList>
            <person name="Bembenek J.N."/>
            <person name="Richie C.T."/>
            <person name="Squirrell J.M."/>
            <person name="Campbell J.M."/>
            <person name="Eliceiri K.W."/>
            <person name="Poteryaev D."/>
            <person name="Spang A."/>
            <person name="Golden A."/>
            <person name="White J.G."/>
        </authorList>
    </citation>
    <scope>FUNCTION</scope>
    <scope>SUBCELLULAR LOCATION</scope>
    <scope>TISSUE SPECIFICITY</scope>
    <scope>DEVELOPMENTAL STAGE</scope>
    <scope>DISRUPTION PHENOTYPE</scope>
    <scope>MUTAGENESIS OF CYS-450</scope>
</reference>
<reference evidence="14" key="6">
    <citation type="journal article" date="2010" name="Curr. Biol.">
        <title>A role for separase in the regulation of RAB-11-positive vesicles at the cleavage furrow and midbody.</title>
        <authorList>
            <person name="Bembenek J.N."/>
            <person name="White J.G."/>
            <person name="Zheng Y."/>
        </authorList>
    </citation>
    <scope>FUNCTION</scope>
    <scope>SUBCELLULAR LOCATION</scope>
    <scope>DEVELOPMENTAL STAGE</scope>
    <scope>DISRUPTION PHENOTYPE</scope>
    <scope>MUTAGENESIS OF CYS-450 AND CYS-1040</scope>
</reference>
<reference evidence="14" key="7">
    <citation type="journal article" date="2011" name="J. Cell Sci.">
        <title>Protein phosphatase 5 is a negative regulator of separase function during cortical granule exocytosis in C. elegans.</title>
        <authorList>
            <person name="Richie C.T."/>
            <person name="Bembenek J.N."/>
            <person name="Chestnut B."/>
            <person name="Furuta T."/>
            <person name="Schumacher J.M."/>
            <person name="Wallenfang M."/>
            <person name="Golden A."/>
        </authorList>
    </citation>
    <scope>FUNCTION</scope>
    <scope>SUBCELLULAR LOCATION</scope>
    <scope>DISRUPTION PHENOTYPE</scope>
    <scope>MUTAGENESIS OF CYS-232 AND LEU-556</scope>
</reference>
<reference evidence="14" key="8">
    <citation type="journal article" date="2013" name="Development">
        <title>HECT-E3 ligase ETC-1 regulates securin and cyclin B1 cytoplasmic abundance to promote timely anaphase during meiosis in C. elegans.</title>
        <authorList>
            <person name="Wang R."/>
            <person name="Kaul Z."/>
            <person name="Ambardekar C."/>
            <person name="Yamamoto T.G."/>
            <person name="Kavdia K."/>
            <person name="Kodali K."/>
            <person name="High A.A."/>
            <person name="Kitagawa R."/>
        </authorList>
    </citation>
    <scope>ACTIVITY REGULATION</scope>
    <scope>INTERACTION WITH IFY-1</scope>
    <scope>DISRUPTION PHENOTYPE</scope>
</reference>
<reference evidence="14" key="9">
    <citation type="journal article" date="2013" name="Proc. Natl. Acad. Sci. U.S.A.">
        <title>Meiotic HORMA domain proteins prevent untimely centriole disengagement during Caenorhabditis elegans spermatocyte meiosis.</title>
        <authorList>
            <person name="Schvarzstein M."/>
            <person name="Pattabiraman D."/>
            <person name="Bembenek J.N."/>
            <person name="Villeneuve A.M."/>
        </authorList>
    </citation>
    <scope>FUNCTION</scope>
    <scope>SUBCELLULAR LOCATION</scope>
    <scope>TISSUE SPECIFICITY</scope>
    <scope>MUTAGENESIS OF CYS-450</scope>
</reference>
<reference evidence="14" key="10">
    <citation type="journal article" date="2015" name="PLoS ONE">
        <title>Separase Cleaves the N-Tail of the CENP-A Related Protein CPAR-1 at the Meiosis I Metaphase-Anaphase Transition in C. elegans.</title>
        <authorList>
            <person name="Monen J."/>
            <person name="Hattersley N."/>
            <person name="Muroyama A."/>
            <person name="Stevens D."/>
            <person name="Oegema K."/>
            <person name="Desai A."/>
        </authorList>
    </citation>
    <scope>FUNCTION</scope>
    <scope>CATALYTIC ACTIVITY</scope>
    <scope>DISRUPTION PHENOTYPE</scope>
</reference>
<reference evidence="14" key="11">
    <citation type="journal article" date="2016" name="Open Biol.">
        <title>A closed conformation of the Caenorhabditis elegans separase-securin complex.</title>
        <authorList>
            <person name="Bachmann G."/>
            <person name="Richards M.W."/>
            <person name="Winter A."/>
            <person name="Beuron F."/>
            <person name="Morris E."/>
            <person name="Bayliss R."/>
        </authorList>
    </citation>
    <scope>STRUCTURE BY ELECTRON MICROSCOPY (24 ANGSTROMS) IN COMPLEX WITH IFY-1</scope>
    <scope>ACTIVITY REGULATION</scope>
</reference>
<reference evidence="14" key="12">
    <citation type="journal article" date="2017" name="Nat. Struct. Mol. Biol.">
        <title>Cryo-EM structure of a metazoan separase-securin complex at near-atomic resolution.</title>
        <authorList>
            <person name="Boland A."/>
            <person name="Martin T.G."/>
            <person name="Zhang Z."/>
            <person name="Yang J."/>
            <person name="Bai X.C."/>
            <person name="Chang L."/>
            <person name="Scheres S.H."/>
            <person name="Barford D."/>
        </authorList>
    </citation>
    <scope>X-RAY CRYSTALLOGRAPHY (3.8 ANGSTROMS) IN COMPLEX WITH IFY-1</scope>
    <scope>ACTIVITY REGULATION</scope>
</reference>
<proteinExistence type="evidence at protein level"/>
<keyword id="KW-0002">3D-structure</keyword>
<keyword id="KW-0131">Cell cycle</keyword>
<keyword id="KW-0132">Cell division</keyword>
<keyword id="KW-0158">Chromosome</keyword>
<keyword id="KW-0159">Chromosome partition</keyword>
<keyword id="KW-0963">Cytoplasm</keyword>
<keyword id="KW-0206">Cytoskeleton</keyword>
<keyword id="KW-0378">Hydrolase</keyword>
<keyword id="KW-0469">Meiosis</keyword>
<keyword id="KW-0498">Mitosis</keyword>
<keyword id="KW-0645">Protease</keyword>
<keyword id="KW-1185">Reference proteome</keyword>
<keyword id="KW-0788">Thiol protease</keyword>